<name>RP5L1_ARATH</name>
<proteinExistence type="inferred from homology"/>
<feature type="chain" id="PRO_0000423330" description="DNA-directed RNA polymerase subunit 5-like protein 1">
    <location>
        <begin position="1"/>
        <end position="210"/>
    </location>
</feature>
<dbReference type="EMBL" id="AB013396">
    <property type="protein sequence ID" value="BAB08868.1"/>
    <property type="molecule type" value="Genomic_DNA"/>
</dbReference>
<dbReference type="EMBL" id="CP002688">
    <property type="protein sequence ID" value="AED96981.1"/>
    <property type="molecule type" value="Genomic_DNA"/>
</dbReference>
<dbReference type="RefSeq" id="NP_200606.1">
    <property type="nucleotide sequence ID" value="NM_125183.2"/>
</dbReference>
<dbReference type="SMR" id="Q9FJL8"/>
<dbReference type="FunCoup" id="Q9FJL8">
    <property type="interactions" value="124"/>
</dbReference>
<dbReference type="STRING" id="3702.Q9FJL8"/>
<dbReference type="PaxDb" id="3702-AT5G57980.1"/>
<dbReference type="ProteomicsDB" id="227977"/>
<dbReference type="EnsemblPlants" id="AT5G57980.1">
    <property type="protein sequence ID" value="AT5G57980.1"/>
    <property type="gene ID" value="AT5G57980"/>
</dbReference>
<dbReference type="GeneID" id="835909"/>
<dbReference type="Gramene" id="AT5G57980.1">
    <property type="protein sequence ID" value="AT5G57980.1"/>
    <property type="gene ID" value="AT5G57980"/>
</dbReference>
<dbReference type="KEGG" id="ath:AT5G57980"/>
<dbReference type="Araport" id="AT5G57980"/>
<dbReference type="TAIR" id="AT5G57980">
    <property type="gene designation" value="RPB5C"/>
</dbReference>
<dbReference type="eggNOG" id="KOG3218">
    <property type="taxonomic scope" value="Eukaryota"/>
</dbReference>
<dbReference type="HOGENOM" id="CLU_058320_0_0_1"/>
<dbReference type="InParanoid" id="Q9FJL8"/>
<dbReference type="OMA" id="ANKGPNP"/>
<dbReference type="OrthoDB" id="248779at2759"/>
<dbReference type="PhylomeDB" id="Q9FJL8"/>
<dbReference type="PRO" id="PR:Q9FJL8"/>
<dbReference type="Proteomes" id="UP000006548">
    <property type="component" value="Chromosome 5"/>
</dbReference>
<dbReference type="ExpressionAtlas" id="Q9FJL8">
    <property type="expression patterns" value="baseline and differential"/>
</dbReference>
<dbReference type="GO" id="GO:0005634">
    <property type="term" value="C:nucleus"/>
    <property type="evidence" value="ECO:0007669"/>
    <property type="project" value="UniProtKB-SubCell"/>
</dbReference>
<dbReference type="GO" id="GO:0003677">
    <property type="term" value="F:DNA binding"/>
    <property type="evidence" value="ECO:0007669"/>
    <property type="project" value="InterPro"/>
</dbReference>
<dbReference type="GO" id="GO:0003899">
    <property type="term" value="F:DNA-directed RNA polymerase activity"/>
    <property type="evidence" value="ECO:0007669"/>
    <property type="project" value="InterPro"/>
</dbReference>
<dbReference type="GO" id="GO:0006351">
    <property type="term" value="P:DNA-templated transcription"/>
    <property type="evidence" value="ECO:0007669"/>
    <property type="project" value="InterPro"/>
</dbReference>
<dbReference type="FunFam" id="3.40.1340.10:FF:000001">
    <property type="entry name" value="DNA-directed RNA polymerases I, II, and III subunit RPABC1"/>
    <property type="match status" value="1"/>
</dbReference>
<dbReference type="FunFam" id="3.90.940.20:FF:000001">
    <property type="entry name" value="DNA-directed RNA polymerases I, II, and III subunit RPABC1"/>
    <property type="match status" value="1"/>
</dbReference>
<dbReference type="Gene3D" id="3.40.1340.10">
    <property type="entry name" value="RNA polymerase, Rpb5, N-terminal domain"/>
    <property type="match status" value="1"/>
</dbReference>
<dbReference type="Gene3D" id="3.90.940.20">
    <property type="entry name" value="RPB5-like RNA polymerase subunit"/>
    <property type="match status" value="1"/>
</dbReference>
<dbReference type="InterPro" id="IPR014381">
    <property type="entry name" value="Arch_Rpo5/euc_Rpb5"/>
</dbReference>
<dbReference type="InterPro" id="IPR005571">
    <property type="entry name" value="RNA_pol_Rpb5_N"/>
</dbReference>
<dbReference type="InterPro" id="IPR036710">
    <property type="entry name" value="RNA_pol_Rpb5_N_sf"/>
</dbReference>
<dbReference type="InterPro" id="IPR000783">
    <property type="entry name" value="RNA_pol_subH/Rpb5_C"/>
</dbReference>
<dbReference type="InterPro" id="IPR035913">
    <property type="entry name" value="RPB5-like_sf"/>
</dbReference>
<dbReference type="PANTHER" id="PTHR10535:SF15">
    <property type="entry name" value="DNA-DIRECTED RNA POLYMERASE SUBUNIT 5-LIKE PROTEIN 1"/>
    <property type="match status" value="1"/>
</dbReference>
<dbReference type="PANTHER" id="PTHR10535">
    <property type="entry name" value="DNA-DIRECTED RNA POLYMERASES I, II, AND III SUBUNIT RPABC1"/>
    <property type="match status" value="1"/>
</dbReference>
<dbReference type="Pfam" id="PF01191">
    <property type="entry name" value="RNA_pol_Rpb5_C"/>
    <property type="match status" value="1"/>
</dbReference>
<dbReference type="Pfam" id="PF03871">
    <property type="entry name" value="RNA_pol_Rpb5_N"/>
    <property type="match status" value="1"/>
</dbReference>
<dbReference type="PIRSF" id="PIRSF000747">
    <property type="entry name" value="RPB5"/>
    <property type="match status" value="1"/>
</dbReference>
<dbReference type="SUPFAM" id="SSF53036">
    <property type="entry name" value="Eukaryotic RPB5 N-terminal domain"/>
    <property type="match status" value="1"/>
</dbReference>
<dbReference type="SUPFAM" id="SSF55287">
    <property type="entry name" value="RPB5-like RNA polymerase subunit"/>
    <property type="match status" value="1"/>
</dbReference>
<keyword id="KW-0539">Nucleus</keyword>
<keyword id="KW-1185">Reference proteome</keyword>
<protein>
    <recommendedName>
        <fullName>DNA-directed RNA polymerase subunit 5-like protein 1</fullName>
    </recommendedName>
</protein>
<organism>
    <name type="scientific">Arabidopsis thaliana</name>
    <name type="common">Mouse-ear cress</name>
    <dbReference type="NCBI Taxonomy" id="3702"/>
    <lineage>
        <taxon>Eukaryota</taxon>
        <taxon>Viridiplantae</taxon>
        <taxon>Streptophyta</taxon>
        <taxon>Embryophyta</taxon>
        <taxon>Tracheophyta</taxon>
        <taxon>Spermatophyta</taxon>
        <taxon>Magnoliopsida</taxon>
        <taxon>eudicotyledons</taxon>
        <taxon>Gunneridae</taxon>
        <taxon>Pentapetalae</taxon>
        <taxon>rosids</taxon>
        <taxon>malvids</taxon>
        <taxon>Brassicales</taxon>
        <taxon>Brassicaceae</taxon>
        <taxon>Camelineae</taxon>
        <taxon>Arabidopsis</taxon>
    </lineage>
</organism>
<comment type="subcellular location">
    <subcellularLocation>
        <location evidence="1">Nucleus</location>
    </subcellularLocation>
</comment>
<comment type="similarity">
    <text evidence="2">Belongs to the archaeal Rpo5/eukaryotic RPB5 RNA polymerase subunit family.</text>
</comment>
<gene>
    <name type="primary">NRPB5L1</name>
    <name type="synonym">RPB5C</name>
    <name type="ordered locus">At5g57980</name>
    <name type="ORF">MTI20.24</name>
</gene>
<sequence length="210" mass="24343">MSDMDDEITRIFKVRRTVLQMLRDRGYTIEESDLNLKREEFVQRFCKTMNKVNKEALFVSANKGPNPADKIYVFYPEGPKVGVPVIKKEVAIKMRDDKVHRGIVVVPMAITAPARMAVSELNKMLTIEVFEEAELVTNITEHKLVNKYYVLDDQAKKKLLNTYTVQDTQLPRILVTDPLARYYGLKRGQVVKIRRSDATSLDYYTYRFAV</sequence>
<evidence type="ECO:0000250" key="1"/>
<evidence type="ECO:0000305" key="2"/>
<reference key="1">
    <citation type="journal article" date="1998" name="DNA Res.">
        <title>Structural analysis of Arabidopsis thaliana chromosome 5. VI. Sequence features of the regions of 1,367,185 bp covered by 19 physically assigned P1 and TAC clones.</title>
        <authorList>
            <person name="Kotani H."/>
            <person name="Nakamura Y."/>
            <person name="Sato S."/>
            <person name="Asamizu E."/>
            <person name="Kaneko T."/>
            <person name="Miyajima N."/>
            <person name="Tabata S."/>
        </authorList>
    </citation>
    <scope>NUCLEOTIDE SEQUENCE [LARGE SCALE GENOMIC DNA]</scope>
    <source>
        <strain>cv. Columbia</strain>
    </source>
</reference>
<reference key="2">
    <citation type="journal article" date="2017" name="Plant J.">
        <title>Araport11: a complete reannotation of the Arabidopsis thaliana reference genome.</title>
        <authorList>
            <person name="Cheng C.Y."/>
            <person name="Krishnakumar V."/>
            <person name="Chan A.P."/>
            <person name="Thibaud-Nissen F."/>
            <person name="Schobel S."/>
            <person name="Town C.D."/>
        </authorList>
    </citation>
    <scope>GENOME REANNOTATION</scope>
    <source>
        <strain>cv. Columbia</strain>
    </source>
</reference>
<reference key="3">
    <citation type="journal article" date="2009" name="Mol. Cell">
        <title>Subunit compositions of the RNA-silencing enzymes Pol IV and Pol V reveal their origins as specialized forms of RNA polymerase II.</title>
        <authorList>
            <person name="Ream T.S."/>
            <person name="Haag J.R."/>
            <person name="Wierzbicki A.T."/>
            <person name="Nicora C.D."/>
            <person name="Norbeck A.D."/>
            <person name="Zhu J.K."/>
            <person name="Hagen G."/>
            <person name="Guilfoyle T.J."/>
            <person name="Pasa-Tolic L."/>
            <person name="Pikaard C.S."/>
        </authorList>
    </citation>
    <scope>NOMENCLATURE</scope>
</reference>
<accession>Q9FJL8</accession>